<comment type="function">
    <text evidence="1">Catalyzes the reversible isomerization of glucose-6-phosphate to fructose-6-phosphate.</text>
</comment>
<comment type="catalytic activity">
    <reaction evidence="1">
        <text>alpha-D-glucose 6-phosphate = beta-D-fructose 6-phosphate</text>
        <dbReference type="Rhea" id="RHEA:11816"/>
        <dbReference type="ChEBI" id="CHEBI:57634"/>
        <dbReference type="ChEBI" id="CHEBI:58225"/>
        <dbReference type="EC" id="5.3.1.9"/>
    </reaction>
</comment>
<comment type="pathway">
    <text evidence="1">Carbohydrate biosynthesis; gluconeogenesis.</text>
</comment>
<comment type="pathway">
    <text evidence="1">Carbohydrate degradation; glycolysis; D-glyceraldehyde 3-phosphate and glycerone phosphate from D-glucose: step 2/4.</text>
</comment>
<comment type="subcellular location">
    <subcellularLocation>
        <location evidence="1">Cytoplasm</location>
    </subcellularLocation>
</comment>
<comment type="similarity">
    <text evidence="1">Belongs to the GPI family.</text>
</comment>
<evidence type="ECO:0000255" key="1">
    <source>
        <dbReference type="HAMAP-Rule" id="MF_00473"/>
    </source>
</evidence>
<feature type="chain" id="PRO_1000125714" description="Glucose-6-phosphate isomerase">
    <location>
        <begin position="1"/>
        <end position="526"/>
    </location>
</feature>
<feature type="active site" description="Proton donor" evidence="1">
    <location>
        <position position="320"/>
    </location>
</feature>
<feature type="active site" evidence="1">
    <location>
        <position position="349"/>
    </location>
</feature>
<feature type="active site" evidence="1">
    <location>
        <position position="453"/>
    </location>
</feature>
<accession>B7KJ74</accession>
<dbReference type="EC" id="5.3.1.9" evidence="1"/>
<dbReference type="EMBL" id="CP001291">
    <property type="protein sequence ID" value="ACK72158.1"/>
    <property type="molecule type" value="Genomic_DNA"/>
</dbReference>
<dbReference type="RefSeq" id="WP_015955750.1">
    <property type="nucleotide sequence ID" value="NC_011729.1"/>
</dbReference>
<dbReference type="SMR" id="B7KJ74"/>
<dbReference type="STRING" id="65393.PCC7424_3777"/>
<dbReference type="KEGG" id="cyc:PCC7424_3777"/>
<dbReference type="eggNOG" id="COG0166">
    <property type="taxonomic scope" value="Bacteria"/>
</dbReference>
<dbReference type="HOGENOM" id="CLU_033288_0_0_3"/>
<dbReference type="OrthoDB" id="140919at2"/>
<dbReference type="UniPathway" id="UPA00109">
    <property type="reaction ID" value="UER00181"/>
</dbReference>
<dbReference type="UniPathway" id="UPA00138"/>
<dbReference type="Proteomes" id="UP000002384">
    <property type="component" value="Chromosome"/>
</dbReference>
<dbReference type="GO" id="GO:0005829">
    <property type="term" value="C:cytosol"/>
    <property type="evidence" value="ECO:0007669"/>
    <property type="project" value="TreeGrafter"/>
</dbReference>
<dbReference type="GO" id="GO:0097367">
    <property type="term" value="F:carbohydrate derivative binding"/>
    <property type="evidence" value="ECO:0007669"/>
    <property type="project" value="InterPro"/>
</dbReference>
<dbReference type="GO" id="GO:0004347">
    <property type="term" value="F:glucose-6-phosphate isomerase activity"/>
    <property type="evidence" value="ECO:0007669"/>
    <property type="project" value="UniProtKB-UniRule"/>
</dbReference>
<dbReference type="GO" id="GO:0048029">
    <property type="term" value="F:monosaccharide binding"/>
    <property type="evidence" value="ECO:0007669"/>
    <property type="project" value="TreeGrafter"/>
</dbReference>
<dbReference type="GO" id="GO:0006094">
    <property type="term" value="P:gluconeogenesis"/>
    <property type="evidence" value="ECO:0007669"/>
    <property type="project" value="UniProtKB-UniRule"/>
</dbReference>
<dbReference type="GO" id="GO:0051156">
    <property type="term" value="P:glucose 6-phosphate metabolic process"/>
    <property type="evidence" value="ECO:0007669"/>
    <property type="project" value="TreeGrafter"/>
</dbReference>
<dbReference type="GO" id="GO:0006096">
    <property type="term" value="P:glycolytic process"/>
    <property type="evidence" value="ECO:0007669"/>
    <property type="project" value="UniProtKB-UniRule"/>
</dbReference>
<dbReference type="CDD" id="cd05015">
    <property type="entry name" value="SIS_PGI_1"/>
    <property type="match status" value="1"/>
</dbReference>
<dbReference type="CDD" id="cd05016">
    <property type="entry name" value="SIS_PGI_2"/>
    <property type="match status" value="1"/>
</dbReference>
<dbReference type="FunFam" id="3.40.50.10490:FF:000021">
    <property type="entry name" value="Glucose-6-phosphate isomerase"/>
    <property type="match status" value="1"/>
</dbReference>
<dbReference type="FunFam" id="3.40.50.10490:FF:000023">
    <property type="entry name" value="Glucose-6-phosphate isomerase"/>
    <property type="match status" value="1"/>
</dbReference>
<dbReference type="Gene3D" id="3.40.50.10490">
    <property type="entry name" value="Glucose-6-phosphate isomerase like protein, domain 1"/>
    <property type="match status" value="2"/>
</dbReference>
<dbReference type="HAMAP" id="MF_00473">
    <property type="entry name" value="G6P_isomerase"/>
    <property type="match status" value="1"/>
</dbReference>
<dbReference type="InterPro" id="IPR001672">
    <property type="entry name" value="G6P_Isomerase"/>
</dbReference>
<dbReference type="InterPro" id="IPR018189">
    <property type="entry name" value="Phosphoglucose_isomerase_CS"/>
</dbReference>
<dbReference type="InterPro" id="IPR046348">
    <property type="entry name" value="SIS_dom_sf"/>
</dbReference>
<dbReference type="InterPro" id="IPR035476">
    <property type="entry name" value="SIS_PGI_1"/>
</dbReference>
<dbReference type="InterPro" id="IPR035482">
    <property type="entry name" value="SIS_PGI_2"/>
</dbReference>
<dbReference type="NCBIfam" id="NF010696">
    <property type="entry name" value="PRK14096.1"/>
    <property type="match status" value="1"/>
</dbReference>
<dbReference type="PANTHER" id="PTHR11469">
    <property type="entry name" value="GLUCOSE-6-PHOSPHATE ISOMERASE"/>
    <property type="match status" value="1"/>
</dbReference>
<dbReference type="PANTHER" id="PTHR11469:SF1">
    <property type="entry name" value="GLUCOSE-6-PHOSPHATE ISOMERASE"/>
    <property type="match status" value="1"/>
</dbReference>
<dbReference type="Pfam" id="PF00342">
    <property type="entry name" value="PGI"/>
    <property type="match status" value="2"/>
</dbReference>
<dbReference type="PRINTS" id="PR00662">
    <property type="entry name" value="G6PISOMERASE"/>
</dbReference>
<dbReference type="SUPFAM" id="SSF53697">
    <property type="entry name" value="SIS domain"/>
    <property type="match status" value="1"/>
</dbReference>
<dbReference type="PROSITE" id="PS00174">
    <property type="entry name" value="P_GLUCOSE_ISOMERASE_2"/>
    <property type="match status" value="1"/>
</dbReference>
<dbReference type="PROSITE" id="PS51463">
    <property type="entry name" value="P_GLUCOSE_ISOMERASE_3"/>
    <property type="match status" value="1"/>
</dbReference>
<gene>
    <name evidence="1" type="primary">pgi</name>
    <name type="ordered locus">PCC7424_3777</name>
</gene>
<keyword id="KW-0963">Cytoplasm</keyword>
<keyword id="KW-0312">Gluconeogenesis</keyword>
<keyword id="KW-0324">Glycolysis</keyword>
<keyword id="KW-0413">Isomerase</keyword>
<keyword id="KW-1185">Reference proteome</keyword>
<reference key="1">
    <citation type="journal article" date="2011" name="MBio">
        <title>Novel metabolic attributes of the genus Cyanothece, comprising a group of unicellular nitrogen-fixing Cyanobacteria.</title>
        <authorList>
            <person name="Bandyopadhyay A."/>
            <person name="Elvitigala T."/>
            <person name="Welsh E."/>
            <person name="Stockel J."/>
            <person name="Liberton M."/>
            <person name="Min H."/>
            <person name="Sherman L.A."/>
            <person name="Pakrasi H.B."/>
        </authorList>
    </citation>
    <scope>NUCLEOTIDE SEQUENCE [LARGE SCALE GENOMIC DNA]</scope>
    <source>
        <strain>PCC 7424</strain>
    </source>
</reference>
<organism>
    <name type="scientific">Gloeothece citriformis (strain PCC 7424)</name>
    <name type="common">Cyanothece sp. (strain PCC 7424)</name>
    <dbReference type="NCBI Taxonomy" id="65393"/>
    <lineage>
        <taxon>Bacteria</taxon>
        <taxon>Bacillati</taxon>
        <taxon>Cyanobacteriota</taxon>
        <taxon>Cyanophyceae</taxon>
        <taxon>Oscillatoriophycideae</taxon>
        <taxon>Chroococcales</taxon>
        <taxon>Aphanothecaceae</taxon>
        <taxon>Gloeothece</taxon>
        <taxon>Gloeothece citriformis</taxon>
    </lineage>
</organism>
<sequence length="526" mass="58182">MEYQTLWQRYLDWLYYHQNLGFYVDISRIRFDDAFIDSIKPKFEKAFKDMEELEKGAIANPDEGRMVGHYWLRAPELAPNDEVRKEITEPLKQIEEFVAKVLKGTIKPPTADKFTDIISVGIGGSALGPQFVSEALAGDFPPMGIHFIDNTDPAGIDRVVTRLKDRLKSTLVIVTSKSGGTPETRNGMLEMRHAYEKNGLDFPKYAVAVTMPGSKMDQVAHDWLARFPMQDWVGGRTSELSAVGLLPAALQGIDIQGMLAGAKEMDEATRVKDLKNNPSALLALSWYYAGNGKGEKDMVVLPYKDSLALLSRYLQQLVMESLGKEKDLDGNTVYQGIAVYGNKGSTDQHAYVQQLREGVPNFFVTFIEVLEDRQGSSIELEPGVTSGDYLAGFIQGTRQALYENHRDSITITIPEVNPRTVGALVALYERAVSFYGSLVNVNAYHQPGVEAGKKAAASILELQQNVMKALKEAGTELDLETLSQKAGHPDKVEAVYKIVRHLAANNRGVMLKGDLGKPTTLKVSFG</sequence>
<protein>
    <recommendedName>
        <fullName evidence="1">Glucose-6-phosphate isomerase</fullName>
        <shortName evidence="1">GPI</shortName>
        <ecNumber evidence="1">5.3.1.9</ecNumber>
    </recommendedName>
    <alternativeName>
        <fullName evidence="1">Phosphoglucose isomerase</fullName>
        <shortName evidence="1">PGI</shortName>
    </alternativeName>
    <alternativeName>
        <fullName evidence="1">Phosphohexose isomerase</fullName>
        <shortName evidence="1">PHI</shortName>
    </alternativeName>
</protein>
<proteinExistence type="inferred from homology"/>
<name>G6PI_GLOC7</name>